<reference key="1">
    <citation type="journal article" date="2005" name="J. Bacteriol.">
        <title>Genomic sequence of an otitis media isolate of nontypeable Haemophilus influenzae: comparative study with H. influenzae serotype d, strain KW20.</title>
        <authorList>
            <person name="Harrison A."/>
            <person name="Dyer D.W."/>
            <person name="Gillaspy A."/>
            <person name="Ray W.C."/>
            <person name="Mungur R."/>
            <person name="Carson M.B."/>
            <person name="Zhong H."/>
            <person name="Gipson J."/>
            <person name="Gipson M."/>
            <person name="Johnson L.S."/>
            <person name="Lewis L."/>
            <person name="Bakaletz L.O."/>
            <person name="Munson R.S. Jr."/>
        </authorList>
    </citation>
    <scope>NUCLEOTIDE SEQUENCE [LARGE SCALE GENOMIC DNA]</scope>
    <source>
        <strain>86-028NP</strain>
    </source>
</reference>
<evidence type="ECO:0000255" key="1">
    <source>
        <dbReference type="HAMAP-Rule" id="MF_00204"/>
    </source>
</evidence>
<sequence>MSEKINTKPFILHSDFRPSGDQPQAIEKLAENLTDGLAHQTLLGVTGSGKTFTIANVIAQLNRPAMLLAPNKTLAAQLYAEMKAFFPENAVEYFVSYYDYYQPEAYVPSSDTFIEKDASINDQIEQMRLSATKSFLERRDTIVVASVSAIYGLGDPDSYLQMMLHLQQGAIIDQRQILAKLAELQYTRNDQAFQRGTFRVRGEIIDIFPAESDDRAVRIELFDDEIERLSLFDPLTGSSFGAVPRFTIYPKTHYVTPRERILDAIENIKKELVSRREYFIKEHKLLEEQRISQRTQFDIEMMNELGYCSGIENYSRYLSGRNEGEPPPTLFDYMPSDAILIIDESHVTVPQIGGMYRGDRSRKETLVEYGFRLPSALDNRPLRFEEFERLAPQTIYVSATPGPYELEKSGTEIIDQVVRPTGLLDPLIEIRPVSIQVDDLLSEARQRADKNERVLVTTLTKKMAEDLTDYLDEHGIRVRYLHSDIDTVERVEIIRDLRLGEFDVLVGINLLREGLDIPEVSLVAILDADKEGFLRSERSLIQTIGRAARNLNGKAILYADSITKSMEKAITETNRRREKQIKYNEEHGIVPQALNKKVGELLDIGQGANQKAKANKQRGKMAAEPTALYNAPKNAKEYQQQIKKLEQQMYKFAQDLEFEKAAAIRDQLHQLREQFVFDN</sequence>
<name>UVRB_HAEI8</name>
<protein>
    <recommendedName>
        <fullName evidence="1">UvrABC system protein B</fullName>
        <shortName evidence="1">Protein UvrB</shortName>
    </recommendedName>
    <alternativeName>
        <fullName evidence="1">Excinuclease ABC subunit B</fullName>
    </alternativeName>
</protein>
<keyword id="KW-0067">ATP-binding</keyword>
<keyword id="KW-0963">Cytoplasm</keyword>
<keyword id="KW-0227">DNA damage</keyword>
<keyword id="KW-0228">DNA excision</keyword>
<keyword id="KW-0234">DNA repair</keyword>
<keyword id="KW-0267">Excision nuclease</keyword>
<keyword id="KW-0547">Nucleotide-binding</keyword>
<keyword id="KW-0742">SOS response</keyword>
<accession>Q4QJX4</accession>
<gene>
    <name evidence="1" type="primary">uvrB</name>
    <name type="ordered locus">NTHI1917</name>
</gene>
<organism>
    <name type="scientific">Haemophilus influenzae (strain 86-028NP)</name>
    <dbReference type="NCBI Taxonomy" id="281310"/>
    <lineage>
        <taxon>Bacteria</taxon>
        <taxon>Pseudomonadati</taxon>
        <taxon>Pseudomonadota</taxon>
        <taxon>Gammaproteobacteria</taxon>
        <taxon>Pasteurellales</taxon>
        <taxon>Pasteurellaceae</taxon>
        <taxon>Haemophilus</taxon>
    </lineage>
</organism>
<proteinExistence type="inferred from homology"/>
<feature type="chain" id="PRO_0000227318" description="UvrABC system protein B">
    <location>
        <begin position="1"/>
        <end position="679"/>
    </location>
</feature>
<feature type="domain" description="Helicase ATP-binding" evidence="1">
    <location>
        <begin position="31"/>
        <end position="414"/>
    </location>
</feature>
<feature type="domain" description="Helicase C-terminal" evidence="1">
    <location>
        <begin position="436"/>
        <end position="589"/>
    </location>
</feature>
<feature type="domain" description="UVR" evidence="1">
    <location>
        <begin position="639"/>
        <end position="674"/>
    </location>
</feature>
<feature type="short sequence motif" description="Beta-hairpin">
    <location>
        <begin position="97"/>
        <end position="120"/>
    </location>
</feature>
<feature type="binding site" evidence="1">
    <location>
        <begin position="44"/>
        <end position="51"/>
    </location>
    <ligand>
        <name>ATP</name>
        <dbReference type="ChEBI" id="CHEBI:30616"/>
    </ligand>
</feature>
<dbReference type="EMBL" id="CP000057">
    <property type="protein sequence ID" value="AAX88673.1"/>
    <property type="molecule type" value="Genomic_DNA"/>
</dbReference>
<dbReference type="RefSeq" id="WP_011272703.1">
    <property type="nucleotide sequence ID" value="NC_007146.2"/>
</dbReference>
<dbReference type="SMR" id="Q4QJX4"/>
<dbReference type="KEGG" id="hit:NTHI1917"/>
<dbReference type="HOGENOM" id="CLU_009621_2_1_6"/>
<dbReference type="Proteomes" id="UP000002525">
    <property type="component" value="Chromosome"/>
</dbReference>
<dbReference type="GO" id="GO:0005737">
    <property type="term" value="C:cytoplasm"/>
    <property type="evidence" value="ECO:0007669"/>
    <property type="project" value="UniProtKB-SubCell"/>
</dbReference>
<dbReference type="GO" id="GO:0009380">
    <property type="term" value="C:excinuclease repair complex"/>
    <property type="evidence" value="ECO:0007669"/>
    <property type="project" value="InterPro"/>
</dbReference>
<dbReference type="GO" id="GO:0005524">
    <property type="term" value="F:ATP binding"/>
    <property type="evidence" value="ECO:0007669"/>
    <property type="project" value="UniProtKB-UniRule"/>
</dbReference>
<dbReference type="GO" id="GO:0016887">
    <property type="term" value="F:ATP hydrolysis activity"/>
    <property type="evidence" value="ECO:0007669"/>
    <property type="project" value="InterPro"/>
</dbReference>
<dbReference type="GO" id="GO:0003677">
    <property type="term" value="F:DNA binding"/>
    <property type="evidence" value="ECO:0007669"/>
    <property type="project" value="UniProtKB-UniRule"/>
</dbReference>
<dbReference type="GO" id="GO:0009381">
    <property type="term" value="F:excinuclease ABC activity"/>
    <property type="evidence" value="ECO:0007669"/>
    <property type="project" value="UniProtKB-UniRule"/>
</dbReference>
<dbReference type="GO" id="GO:0006289">
    <property type="term" value="P:nucleotide-excision repair"/>
    <property type="evidence" value="ECO:0007669"/>
    <property type="project" value="UniProtKB-UniRule"/>
</dbReference>
<dbReference type="GO" id="GO:0009432">
    <property type="term" value="P:SOS response"/>
    <property type="evidence" value="ECO:0007669"/>
    <property type="project" value="UniProtKB-UniRule"/>
</dbReference>
<dbReference type="CDD" id="cd17916">
    <property type="entry name" value="DEXHc_UvrB"/>
    <property type="match status" value="1"/>
</dbReference>
<dbReference type="CDD" id="cd18790">
    <property type="entry name" value="SF2_C_UvrB"/>
    <property type="match status" value="1"/>
</dbReference>
<dbReference type="FunFam" id="3.40.50.300:FF:000257">
    <property type="entry name" value="UvrABC system protein B"/>
    <property type="match status" value="1"/>
</dbReference>
<dbReference type="FunFam" id="3.40.50.300:FF:000477">
    <property type="entry name" value="UvrABC system protein B"/>
    <property type="match status" value="1"/>
</dbReference>
<dbReference type="Gene3D" id="3.40.50.300">
    <property type="entry name" value="P-loop containing nucleotide triphosphate hydrolases"/>
    <property type="match status" value="3"/>
</dbReference>
<dbReference type="Gene3D" id="4.10.860.10">
    <property type="entry name" value="UVR domain"/>
    <property type="match status" value="1"/>
</dbReference>
<dbReference type="HAMAP" id="MF_00204">
    <property type="entry name" value="UvrB"/>
    <property type="match status" value="1"/>
</dbReference>
<dbReference type="InterPro" id="IPR006935">
    <property type="entry name" value="Helicase/UvrB_N"/>
</dbReference>
<dbReference type="InterPro" id="IPR014001">
    <property type="entry name" value="Helicase_ATP-bd"/>
</dbReference>
<dbReference type="InterPro" id="IPR001650">
    <property type="entry name" value="Helicase_C-like"/>
</dbReference>
<dbReference type="InterPro" id="IPR027417">
    <property type="entry name" value="P-loop_NTPase"/>
</dbReference>
<dbReference type="InterPro" id="IPR001943">
    <property type="entry name" value="UVR_dom"/>
</dbReference>
<dbReference type="InterPro" id="IPR036876">
    <property type="entry name" value="UVR_dom_sf"/>
</dbReference>
<dbReference type="InterPro" id="IPR004807">
    <property type="entry name" value="UvrB"/>
</dbReference>
<dbReference type="InterPro" id="IPR041471">
    <property type="entry name" value="UvrB_inter"/>
</dbReference>
<dbReference type="InterPro" id="IPR024759">
    <property type="entry name" value="UvrB_YAD/RRR_dom"/>
</dbReference>
<dbReference type="NCBIfam" id="NF003673">
    <property type="entry name" value="PRK05298.1"/>
    <property type="match status" value="1"/>
</dbReference>
<dbReference type="NCBIfam" id="TIGR00631">
    <property type="entry name" value="uvrb"/>
    <property type="match status" value="1"/>
</dbReference>
<dbReference type="PANTHER" id="PTHR24029">
    <property type="entry name" value="UVRABC SYSTEM PROTEIN B"/>
    <property type="match status" value="1"/>
</dbReference>
<dbReference type="PANTHER" id="PTHR24029:SF0">
    <property type="entry name" value="UVRABC SYSTEM PROTEIN B"/>
    <property type="match status" value="1"/>
</dbReference>
<dbReference type="Pfam" id="PF00271">
    <property type="entry name" value="Helicase_C"/>
    <property type="match status" value="1"/>
</dbReference>
<dbReference type="Pfam" id="PF04851">
    <property type="entry name" value="ResIII"/>
    <property type="match status" value="1"/>
</dbReference>
<dbReference type="Pfam" id="PF02151">
    <property type="entry name" value="UVR"/>
    <property type="match status" value="1"/>
</dbReference>
<dbReference type="Pfam" id="PF12344">
    <property type="entry name" value="UvrB"/>
    <property type="match status" value="1"/>
</dbReference>
<dbReference type="Pfam" id="PF17757">
    <property type="entry name" value="UvrB_inter"/>
    <property type="match status" value="1"/>
</dbReference>
<dbReference type="SMART" id="SM00487">
    <property type="entry name" value="DEXDc"/>
    <property type="match status" value="1"/>
</dbReference>
<dbReference type="SMART" id="SM00490">
    <property type="entry name" value="HELICc"/>
    <property type="match status" value="1"/>
</dbReference>
<dbReference type="SUPFAM" id="SSF46600">
    <property type="entry name" value="C-terminal UvrC-binding domain of UvrB"/>
    <property type="match status" value="1"/>
</dbReference>
<dbReference type="SUPFAM" id="SSF52540">
    <property type="entry name" value="P-loop containing nucleoside triphosphate hydrolases"/>
    <property type="match status" value="2"/>
</dbReference>
<dbReference type="PROSITE" id="PS51192">
    <property type="entry name" value="HELICASE_ATP_BIND_1"/>
    <property type="match status" value="1"/>
</dbReference>
<dbReference type="PROSITE" id="PS51194">
    <property type="entry name" value="HELICASE_CTER"/>
    <property type="match status" value="1"/>
</dbReference>
<dbReference type="PROSITE" id="PS50151">
    <property type="entry name" value="UVR"/>
    <property type="match status" value="1"/>
</dbReference>
<comment type="function">
    <text evidence="1">The UvrABC repair system catalyzes the recognition and processing of DNA lesions. A damage recognition complex composed of 2 UvrA and 2 UvrB subunits scans DNA for abnormalities. Upon binding of the UvrA(2)B(2) complex to a putative damaged site, the DNA wraps around one UvrB monomer. DNA wrap is dependent on ATP binding by UvrB and probably causes local melting of the DNA helix, facilitating insertion of UvrB beta-hairpin between the DNA strands. Then UvrB probes one DNA strand for the presence of a lesion. If a lesion is found the UvrA subunits dissociate and the UvrB-DNA preincision complex is formed. This complex is subsequently bound by UvrC and the second UvrB is released. If no lesion is found, the DNA wraps around the other UvrB subunit that will check the other stand for damage.</text>
</comment>
<comment type="subunit">
    <text evidence="1">Forms a heterotetramer with UvrA during the search for lesions. Interacts with UvrC in an incision complex.</text>
</comment>
<comment type="subcellular location">
    <subcellularLocation>
        <location evidence="1">Cytoplasm</location>
    </subcellularLocation>
</comment>
<comment type="domain">
    <text evidence="1">The beta-hairpin motif is involved in DNA binding.</text>
</comment>
<comment type="similarity">
    <text evidence="1">Belongs to the UvrB family.</text>
</comment>